<accession>B0KQK4</accession>
<protein>
    <recommendedName>
        <fullName evidence="1">Ribosomal RNA large subunit methyltransferase F</fullName>
        <ecNumber evidence="1">2.1.1.181</ecNumber>
    </recommendedName>
    <alternativeName>
        <fullName evidence="1">23S rRNA mA1618 methyltransferase</fullName>
    </alternativeName>
    <alternativeName>
        <fullName evidence="1">rRNA adenine N-6-methyltransferase</fullName>
    </alternativeName>
</protein>
<proteinExistence type="inferred from homology"/>
<reference key="1">
    <citation type="submission" date="2008-01" db="EMBL/GenBank/DDBJ databases">
        <title>Complete sequence of Pseudomonas putida GB-1.</title>
        <authorList>
            <consortium name="US DOE Joint Genome Institute"/>
            <person name="Copeland A."/>
            <person name="Lucas S."/>
            <person name="Lapidus A."/>
            <person name="Barry K."/>
            <person name="Glavina del Rio T."/>
            <person name="Dalin E."/>
            <person name="Tice H."/>
            <person name="Pitluck S."/>
            <person name="Bruce D."/>
            <person name="Goodwin L."/>
            <person name="Chertkov O."/>
            <person name="Brettin T."/>
            <person name="Detter J.C."/>
            <person name="Han C."/>
            <person name="Kuske C.R."/>
            <person name="Schmutz J."/>
            <person name="Larimer F."/>
            <person name="Land M."/>
            <person name="Hauser L."/>
            <person name="Kyrpides N."/>
            <person name="Kim E."/>
            <person name="McCarthy J.K."/>
            <person name="Richardson P."/>
        </authorList>
    </citation>
    <scope>NUCLEOTIDE SEQUENCE [LARGE SCALE GENOMIC DNA]</scope>
    <source>
        <strain>GB-1</strain>
    </source>
</reference>
<gene>
    <name evidence="1" type="primary">rlmF</name>
    <name type="ordered locus">PputGB1_0982</name>
</gene>
<name>RLMF_PSEPG</name>
<keyword id="KW-0963">Cytoplasm</keyword>
<keyword id="KW-0489">Methyltransferase</keyword>
<keyword id="KW-0698">rRNA processing</keyword>
<keyword id="KW-0949">S-adenosyl-L-methionine</keyword>
<keyword id="KW-0808">Transferase</keyword>
<dbReference type="EC" id="2.1.1.181" evidence="1"/>
<dbReference type="EMBL" id="CP000926">
    <property type="protein sequence ID" value="ABY96892.1"/>
    <property type="molecule type" value="Genomic_DNA"/>
</dbReference>
<dbReference type="RefSeq" id="WP_012270677.1">
    <property type="nucleotide sequence ID" value="NC_010322.1"/>
</dbReference>
<dbReference type="SMR" id="B0KQK4"/>
<dbReference type="KEGG" id="ppg:PputGB1_0982"/>
<dbReference type="eggNOG" id="COG3129">
    <property type="taxonomic scope" value="Bacteria"/>
</dbReference>
<dbReference type="HOGENOM" id="CLU_027534_3_0_6"/>
<dbReference type="Proteomes" id="UP000002157">
    <property type="component" value="Chromosome"/>
</dbReference>
<dbReference type="GO" id="GO:0005737">
    <property type="term" value="C:cytoplasm"/>
    <property type="evidence" value="ECO:0007669"/>
    <property type="project" value="UniProtKB-SubCell"/>
</dbReference>
<dbReference type="GO" id="GO:0052907">
    <property type="term" value="F:23S rRNA (adenine(1618)-N(6))-methyltransferase activity"/>
    <property type="evidence" value="ECO:0007669"/>
    <property type="project" value="UniProtKB-EC"/>
</dbReference>
<dbReference type="GO" id="GO:0070475">
    <property type="term" value="P:rRNA base methylation"/>
    <property type="evidence" value="ECO:0007669"/>
    <property type="project" value="TreeGrafter"/>
</dbReference>
<dbReference type="CDD" id="cd02440">
    <property type="entry name" value="AdoMet_MTases"/>
    <property type="match status" value="1"/>
</dbReference>
<dbReference type="Gene3D" id="3.40.50.150">
    <property type="entry name" value="Vaccinia Virus protein VP39"/>
    <property type="match status" value="1"/>
</dbReference>
<dbReference type="HAMAP" id="MF_01848">
    <property type="entry name" value="23SrRNA_methyltr_F"/>
    <property type="match status" value="1"/>
</dbReference>
<dbReference type="InterPro" id="IPR010286">
    <property type="entry name" value="METTL16/RlmF"/>
</dbReference>
<dbReference type="InterPro" id="IPR016909">
    <property type="entry name" value="rRNA_lsu_MeTfrase_F"/>
</dbReference>
<dbReference type="InterPro" id="IPR029063">
    <property type="entry name" value="SAM-dependent_MTases_sf"/>
</dbReference>
<dbReference type="NCBIfam" id="NF008725">
    <property type="entry name" value="PRK11727.1"/>
    <property type="match status" value="1"/>
</dbReference>
<dbReference type="PANTHER" id="PTHR13393:SF0">
    <property type="entry name" value="RNA N6-ADENOSINE-METHYLTRANSFERASE METTL16"/>
    <property type="match status" value="1"/>
</dbReference>
<dbReference type="PANTHER" id="PTHR13393">
    <property type="entry name" value="SAM-DEPENDENT METHYLTRANSFERASE"/>
    <property type="match status" value="1"/>
</dbReference>
<dbReference type="Pfam" id="PF05971">
    <property type="entry name" value="Methyltransf_10"/>
    <property type="match status" value="1"/>
</dbReference>
<dbReference type="PIRSF" id="PIRSF029038">
    <property type="entry name" value="Mtase_YbiN_prd"/>
    <property type="match status" value="1"/>
</dbReference>
<dbReference type="SUPFAM" id="SSF53335">
    <property type="entry name" value="S-adenosyl-L-methionine-dependent methyltransferases"/>
    <property type="match status" value="1"/>
</dbReference>
<comment type="function">
    <text evidence="1">Specifically methylates the adenine in position 1618 of 23S rRNA.</text>
</comment>
<comment type="catalytic activity">
    <reaction evidence="1">
        <text>adenosine(1618) in 23S rRNA + S-adenosyl-L-methionine = N(6)-methyladenosine(1618) in 23S rRNA + S-adenosyl-L-homocysteine + H(+)</text>
        <dbReference type="Rhea" id="RHEA:16497"/>
        <dbReference type="Rhea" id="RHEA-COMP:10229"/>
        <dbReference type="Rhea" id="RHEA-COMP:10231"/>
        <dbReference type="ChEBI" id="CHEBI:15378"/>
        <dbReference type="ChEBI" id="CHEBI:57856"/>
        <dbReference type="ChEBI" id="CHEBI:59789"/>
        <dbReference type="ChEBI" id="CHEBI:74411"/>
        <dbReference type="ChEBI" id="CHEBI:74449"/>
        <dbReference type="EC" id="2.1.1.181"/>
    </reaction>
</comment>
<comment type="subcellular location">
    <subcellularLocation>
        <location evidence="1">Cytoplasm</location>
    </subcellularLocation>
</comment>
<comment type="similarity">
    <text evidence="1">Belongs to the methyltransferase superfamily. METTL16/RlmF family.</text>
</comment>
<organism>
    <name type="scientific">Pseudomonas putida (strain GB-1)</name>
    <dbReference type="NCBI Taxonomy" id="76869"/>
    <lineage>
        <taxon>Bacteria</taxon>
        <taxon>Pseudomonadati</taxon>
        <taxon>Pseudomonadota</taxon>
        <taxon>Gammaproteobacteria</taxon>
        <taxon>Pseudomonadales</taxon>
        <taxon>Pseudomonadaceae</taxon>
        <taxon>Pseudomonas</taxon>
    </lineage>
</organism>
<sequence length="316" mass="34998">MTEKPTLHPRNRHQGRYDFPSLIKAHPDLARFTITNPHGKPSIDFANPEAVRVFNRALLKAQYGIQHWDIPADYLCPPIPGRADYIHVAADLLADDNAGEVPKGAQVRALDIGVGANCIYPLLGHSDYRWRFLGSDIDPVALASAKAIVQANGLGKAIILRQQANRAHILSGLLQEGERFDLTLCNPPFHASRDEATRGSQRKWKNLGKQDPKRKLPVLNFGGQNNELWCEGGEIRFVSQLVGESVQYAERVLWFTSLVSKASNLPGIEAALKKAGAKAVRIIEMGQGQKQSRMVAWSFHDAAARLAWHAQRKSQA</sequence>
<feature type="chain" id="PRO_0000349933" description="Ribosomal RNA large subunit methyltransferase F">
    <location>
        <begin position="1"/>
        <end position="316"/>
    </location>
</feature>
<evidence type="ECO:0000255" key="1">
    <source>
        <dbReference type="HAMAP-Rule" id="MF_01848"/>
    </source>
</evidence>